<evidence type="ECO:0000250" key="1"/>
<evidence type="ECO:0000250" key="2">
    <source>
        <dbReference type="UniProtKB" id="P00157"/>
    </source>
</evidence>
<evidence type="ECO:0000255" key="3">
    <source>
        <dbReference type="PROSITE-ProRule" id="PRU00967"/>
    </source>
</evidence>
<evidence type="ECO:0000255" key="4">
    <source>
        <dbReference type="PROSITE-ProRule" id="PRU00968"/>
    </source>
</evidence>
<dbReference type="EMBL" id="AF119263">
    <property type="protein sequence ID" value="AAD43881.1"/>
    <property type="molecule type" value="Genomic_DNA"/>
</dbReference>
<dbReference type="SMR" id="Q9XNN0"/>
<dbReference type="GO" id="GO:0005743">
    <property type="term" value="C:mitochondrial inner membrane"/>
    <property type="evidence" value="ECO:0007669"/>
    <property type="project" value="UniProtKB-SubCell"/>
</dbReference>
<dbReference type="GO" id="GO:0045275">
    <property type="term" value="C:respiratory chain complex III"/>
    <property type="evidence" value="ECO:0007669"/>
    <property type="project" value="InterPro"/>
</dbReference>
<dbReference type="GO" id="GO:0046872">
    <property type="term" value="F:metal ion binding"/>
    <property type="evidence" value="ECO:0007669"/>
    <property type="project" value="UniProtKB-KW"/>
</dbReference>
<dbReference type="GO" id="GO:0008121">
    <property type="term" value="F:ubiquinol-cytochrome-c reductase activity"/>
    <property type="evidence" value="ECO:0007669"/>
    <property type="project" value="InterPro"/>
</dbReference>
<dbReference type="GO" id="GO:0006122">
    <property type="term" value="P:mitochondrial electron transport, ubiquinol to cytochrome c"/>
    <property type="evidence" value="ECO:0007669"/>
    <property type="project" value="TreeGrafter"/>
</dbReference>
<dbReference type="CDD" id="cd00290">
    <property type="entry name" value="cytochrome_b_C"/>
    <property type="match status" value="1"/>
</dbReference>
<dbReference type="CDD" id="cd00284">
    <property type="entry name" value="Cytochrome_b_N"/>
    <property type="match status" value="1"/>
</dbReference>
<dbReference type="FunFam" id="1.20.810.10:FF:000002">
    <property type="entry name" value="Cytochrome b"/>
    <property type="match status" value="1"/>
</dbReference>
<dbReference type="Gene3D" id="1.20.810.10">
    <property type="entry name" value="Cytochrome Bc1 Complex, Chain C"/>
    <property type="match status" value="1"/>
</dbReference>
<dbReference type="InterPro" id="IPR005798">
    <property type="entry name" value="Cyt_b/b6_C"/>
</dbReference>
<dbReference type="InterPro" id="IPR036150">
    <property type="entry name" value="Cyt_b/b6_C_sf"/>
</dbReference>
<dbReference type="InterPro" id="IPR005797">
    <property type="entry name" value="Cyt_b/b6_N"/>
</dbReference>
<dbReference type="InterPro" id="IPR027387">
    <property type="entry name" value="Cytb/b6-like_sf"/>
</dbReference>
<dbReference type="InterPro" id="IPR030689">
    <property type="entry name" value="Cytochrome_b"/>
</dbReference>
<dbReference type="InterPro" id="IPR048260">
    <property type="entry name" value="Cytochrome_b_C_euk/bac"/>
</dbReference>
<dbReference type="InterPro" id="IPR048259">
    <property type="entry name" value="Cytochrome_b_N_euk/bac"/>
</dbReference>
<dbReference type="InterPro" id="IPR016174">
    <property type="entry name" value="Di-haem_cyt_TM"/>
</dbReference>
<dbReference type="PANTHER" id="PTHR19271">
    <property type="entry name" value="CYTOCHROME B"/>
    <property type="match status" value="1"/>
</dbReference>
<dbReference type="PANTHER" id="PTHR19271:SF16">
    <property type="entry name" value="CYTOCHROME B"/>
    <property type="match status" value="1"/>
</dbReference>
<dbReference type="Pfam" id="PF00032">
    <property type="entry name" value="Cytochrom_B_C"/>
    <property type="match status" value="1"/>
</dbReference>
<dbReference type="Pfam" id="PF00033">
    <property type="entry name" value="Cytochrome_B"/>
    <property type="match status" value="1"/>
</dbReference>
<dbReference type="PIRSF" id="PIRSF038885">
    <property type="entry name" value="COB"/>
    <property type="match status" value="1"/>
</dbReference>
<dbReference type="SUPFAM" id="SSF81648">
    <property type="entry name" value="a domain/subunit of cytochrome bc1 complex (Ubiquinol-cytochrome c reductase)"/>
    <property type="match status" value="1"/>
</dbReference>
<dbReference type="SUPFAM" id="SSF81342">
    <property type="entry name" value="Transmembrane di-heme cytochromes"/>
    <property type="match status" value="1"/>
</dbReference>
<dbReference type="PROSITE" id="PS51003">
    <property type="entry name" value="CYTB_CTER"/>
    <property type="match status" value="1"/>
</dbReference>
<dbReference type="PROSITE" id="PS51002">
    <property type="entry name" value="CYTB_NTER"/>
    <property type="match status" value="1"/>
</dbReference>
<sequence>MTITRKKHPLFKIINHSFINLPTPSNISSWWNFGSLLGLCLMVQILTGLFLAMHYTSDTTTAFSSVAHICRDVNYGWLIRYMHANGASMFFICLFLHVGRGIYYGSYNMIETWNVGIVLLLTVMATAFMGYVLPWGQMSFWGATVITNLLSAIPYIGSTLVEWIWGGFSVDKPTLTRFFAFHFILPFIITALVLVHLLFLHETGSTNPTGLNSDADKIPFHPYYTIKDLLGALLLLSALMILVLFFPDALGDPDNYTPANPLNTPAHIKPEWYFLFAYAILRSIPNKLGGVLALLLSILILALMPILHTSKQRTLVFRPITQTVYWILVADLLILTWIGGQPVEYPFAIIGQAASIAYFSIIVILMPIAGIIENDIMDLN</sequence>
<name>CYB_MYOSH</name>
<proteinExistence type="inferred from homology"/>
<reference key="1">
    <citation type="journal article" date="1999" name="J. Mammal. Evol.">
        <title>MtDNA evidence for repeated pulses of speciation within arvicoline and murid rodents.</title>
        <authorList>
            <person name="Conroy C.J."/>
            <person name="Cook J.A."/>
        </authorList>
    </citation>
    <scope>NUCLEOTIDE SEQUENCE [GENOMIC DNA]</scope>
</reference>
<geneLocation type="mitochondrion"/>
<protein>
    <recommendedName>
        <fullName>Cytochrome b</fullName>
    </recommendedName>
    <alternativeName>
        <fullName>Complex III subunit 3</fullName>
    </alternativeName>
    <alternativeName>
        <fullName>Complex III subunit III</fullName>
    </alternativeName>
    <alternativeName>
        <fullName>Cytochrome b-c1 complex subunit 3</fullName>
    </alternativeName>
    <alternativeName>
        <fullName>Ubiquinol-cytochrome-c reductase complex cytochrome b subunit</fullName>
    </alternativeName>
</protein>
<comment type="function">
    <text evidence="2">Component of the ubiquinol-cytochrome c reductase complex (complex III or cytochrome b-c1 complex) that is part of the mitochondrial respiratory chain. The b-c1 complex mediates electron transfer from ubiquinol to cytochrome c. Contributes to the generation of a proton gradient across the mitochondrial membrane that is then used for ATP synthesis.</text>
</comment>
<comment type="cofactor">
    <cofactor evidence="2">
        <name>heme b</name>
        <dbReference type="ChEBI" id="CHEBI:60344"/>
    </cofactor>
    <text evidence="2">Binds 2 heme b groups non-covalently.</text>
</comment>
<comment type="subunit">
    <text evidence="2">The cytochrome bc1 complex contains 11 subunits: 3 respiratory subunits (MT-CYB, CYC1 and UQCRFS1), 2 core proteins (UQCRC1 and UQCRC2) and 6 low-molecular weight proteins (UQCRH/QCR6, UQCRB/QCR7, UQCRQ/QCR8, UQCR10/QCR9, UQCR11/QCR10 and a cleavage product of UQCRFS1). This cytochrome bc1 complex then forms a dimer.</text>
</comment>
<comment type="subcellular location">
    <subcellularLocation>
        <location evidence="2">Mitochondrion inner membrane</location>
        <topology evidence="2">Multi-pass membrane protein</topology>
    </subcellularLocation>
</comment>
<comment type="miscellaneous">
    <text evidence="1">Heme 1 (or BL or b562) is low-potential and absorbs at about 562 nm, and heme 2 (or BH or b566) is high-potential and absorbs at about 566 nm.</text>
</comment>
<comment type="similarity">
    <text evidence="3 4">Belongs to the cytochrome b family.</text>
</comment>
<comment type="caution">
    <text evidence="2">The full-length protein contains only eight transmembrane helices, not nine as predicted by bioinformatics tools.</text>
</comment>
<keyword id="KW-0249">Electron transport</keyword>
<keyword id="KW-0349">Heme</keyword>
<keyword id="KW-0408">Iron</keyword>
<keyword id="KW-0472">Membrane</keyword>
<keyword id="KW-0479">Metal-binding</keyword>
<keyword id="KW-0496">Mitochondrion</keyword>
<keyword id="KW-0999">Mitochondrion inner membrane</keyword>
<keyword id="KW-0679">Respiratory chain</keyword>
<keyword id="KW-0812">Transmembrane</keyword>
<keyword id="KW-1133">Transmembrane helix</keyword>
<keyword id="KW-0813">Transport</keyword>
<keyword id="KW-0830">Ubiquinone</keyword>
<gene>
    <name type="primary">MT-CYB</name>
    <name type="synonym">COB</name>
    <name type="synonym">CYTB</name>
    <name type="synonym">MTCYB</name>
</gene>
<accession>Q9XNN0</accession>
<organism>
    <name type="scientific">Myopus schisticolor</name>
    <name type="common">Wood lemming</name>
    <dbReference type="NCBI Taxonomy" id="71003"/>
    <lineage>
        <taxon>Eukaryota</taxon>
        <taxon>Metazoa</taxon>
        <taxon>Chordata</taxon>
        <taxon>Craniata</taxon>
        <taxon>Vertebrata</taxon>
        <taxon>Euteleostomi</taxon>
        <taxon>Mammalia</taxon>
        <taxon>Eutheria</taxon>
        <taxon>Euarchontoglires</taxon>
        <taxon>Glires</taxon>
        <taxon>Rodentia</taxon>
        <taxon>Myomorpha</taxon>
        <taxon>Muroidea</taxon>
        <taxon>Cricetidae</taxon>
        <taxon>Arvicolinae</taxon>
        <taxon>Myopus</taxon>
    </lineage>
</organism>
<feature type="chain" id="PRO_0000257926" description="Cytochrome b">
    <location>
        <begin position="1"/>
        <end position="380"/>
    </location>
</feature>
<feature type="transmembrane region" description="Helical" evidence="2">
    <location>
        <begin position="33"/>
        <end position="53"/>
    </location>
</feature>
<feature type="transmembrane region" description="Helical" evidence="2">
    <location>
        <begin position="77"/>
        <end position="98"/>
    </location>
</feature>
<feature type="transmembrane region" description="Helical" evidence="2">
    <location>
        <begin position="113"/>
        <end position="133"/>
    </location>
</feature>
<feature type="transmembrane region" description="Helical" evidence="2">
    <location>
        <begin position="178"/>
        <end position="198"/>
    </location>
</feature>
<feature type="transmembrane region" description="Helical" evidence="2">
    <location>
        <begin position="226"/>
        <end position="246"/>
    </location>
</feature>
<feature type="transmembrane region" description="Helical" evidence="2">
    <location>
        <begin position="288"/>
        <end position="308"/>
    </location>
</feature>
<feature type="transmembrane region" description="Helical" evidence="2">
    <location>
        <begin position="320"/>
        <end position="340"/>
    </location>
</feature>
<feature type="transmembrane region" description="Helical" evidence="2">
    <location>
        <begin position="347"/>
        <end position="367"/>
    </location>
</feature>
<feature type="binding site" description="axial binding residue" evidence="2">
    <location>
        <position position="83"/>
    </location>
    <ligand>
        <name>heme b</name>
        <dbReference type="ChEBI" id="CHEBI:60344"/>
        <label>b562</label>
    </ligand>
    <ligandPart>
        <name>Fe</name>
        <dbReference type="ChEBI" id="CHEBI:18248"/>
    </ligandPart>
</feature>
<feature type="binding site" description="axial binding residue" evidence="2">
    <location>
        <position position="97"/>
    </location>
    <ligand>
        <name>heme b</name>
        <dbReference type="ChEBI" id="CHEBI:60344"/>
        <label>b566</label>
    </ligand>
    <ligandPart>
        <name>Fe</name>
        <dbReference type="ChEBI" id="CHEBI:18248"/>
    </ligandPart>
</feature>
<feature type="binding site" description="axial binding residue" evidence="2">
    <location>
        <position position="182"/>
    </location>
    <ligand>
        <name>heme b</name>
        <dbReference type="ChEBI" id="CHEBI:60344"/>
        <label>b562</label>
    </ligand>
    <ligandPart>
        <name>Fe</name>
        <dbReference type="ChEBI" id="CHEBI:18248"/>
    </ligandPart>
</feature>
<feature type="binding site" description="axial binding residue" evidence="2">
    <location>
        <position position="196"/>
    </location>
    <ligand>
        <name>heme b</name>
        <dbReference type="ChEBI" id="CHEBI:60344"/>
        <label>b566</label>
    </ligand>
    <ligandPart>
        <name>Fe</name>
        <dbReference type="ChEBI" id="CHEBI:18248"/>
    </ligandPart>
</feature>
<feature type="binding site" evidence="2">
    <location>
        <position position="201"/>
    </location>
    <ligand>
        <name>a ubiquinone</name>
        <dbReference type="ChEBI" id="CHEBI:16389"/>
    </ligand>
</feature>